<sequence length="153" mass="17299">MAANCERTFIAIKPDGVQRGLVGEIIKRFEQKGFRLVGMKFVHASEELLKQHYIDLKDRPFYPGLVKYMNSGPIVAMVWEGLNVVKTGRVMLGETNPADSKPGTIRGDFCIQVGRNIIHGSDSVESAQKEINLWFKPAELIDFKSCAHDWIYE</sequence>
<accession>Q90380</accession>
<organism>
    <name type="scientific">Columba livia</name>
    <name type="common">Rock dove</name>
    <dbReference type="NCBI Taxonomy" id="8932"/>
    <lineage>
        <taxon>Eukaryota</taxon>
        <taxon>Metazoa</taxon>
        <taxon>Chordata</taxon>
        <taxon>Craniata</taxon>
        <taxon>Vertebrata</taxon>
        <taxon>Euteleostomi</taxon>
        <taxon>Archelosauria</taxon>
        <taxon>Archosauria</taxon>
        <taxon>Dinosauria</taxon>
        <taxon>Saurischia</taxon>
        <taxon>Theropoda</taxon>
        <taxon>Coelurosauria</taxon>
        <taxon>Aves</taxon>
        <taxon>Neognathae</taxon>
        <taxon>Neoaves</taxon>
        <taxon>Columbimorphae</taxon>
        <taxon>Columbiformes</taxon>
        <taxon>Columbidae</taxon>
        <taxon>Columba</taxon>
    </lineage>
</organism>
<name>NDK_COLLI</name>
<proteinExistence type="evidence at transcript level"/>
<feature type="chain" id="PRO_0000137122" description="Nucleoside diphosphate kinase">
    <location>
        <begin position="1"/>
        <end position="153"/>
    </location>
</feature>
<feature type="active site" description="Pros-phosphohistidine intermediate" evidence="1">
    <location>
        <position position="119"/>
    </location>
</feature>
<feature type="binding site" evidence="1">
    <location>
        <position position="13"/>
    </location>
    <ligand>
        <name>ATP</name>
        <dbReference type="ChEBI" id="CHEBI:30616"/>
    </ligand>
</feature>
<feature type="binding site" evidence="1">
    <location>
        <position position="61"/>
    </location>
    <ligand>
        <name>ATP</name>
        <dbReference type="ChEBI" id="CHEBI:30616"/>
    </ligand>
</feature>
<feature type="binding site" evidence="1">
    <location>
        <position position="89"/>
    </location>
    <ligand>
        <name>ATP</name>
        <dbReference type="ChEBI" id="CHEBI:30616"/>
    </ligand>
</feature>
<feature type="binding site" evidence="1">
    <location>
        <position position="95"/>
    </location>
    <ligand>
        <name>ATP</name>
        <dbReference type="ChEBI" id="CHEBI:30616"/>
    </ligand>
</feature>
<feature type="binding site" evidence="1">
    <location>
        <position position="106"/>
    </location>
    <ligand>
        <name>ATP</name>
        <dbReference type="ChEBI" id="CHEBI:30616"/>
    </ligand>
</feature>
<feature type="binding site" evidence="1">
    <location>
        <position position="116"/>
    </location>
    <ligand>
        <name>ATP</name>
        <dbReference type="ChEBI" id="CHEBI:30616"/>
    </ligand>
</feature>
<comment type="function">
    <text>Major role in the synthesis of nucleoside triphosphates other than ATP. The ATP gamma phosphate is transferred to the NDP beta phosphate via a ping-pong mechanism, using a phosphorylated active-site intermediate.</text>
</comment>
<comment type="catalytic activity">
    <reaction>
        <text>a 2'-deoxyribonucleoside 5'-diphosphate + ATP = a 2'-deoxyribonucleoside 5'-triphosphate + ADP</text>
        <dbReference type="Rhea" id="RHEA:44640"/>
        <dbReference type="ChEBI" id="CHEBI:30616"/>
        <dbReference type="ChEBI" id="CHEBI:61560"/>
        <dbReference type="ChEBI" id="CHEBI:73316"/>
        <dbReference type="ChEBI" id="CHEBI:456216"/>
        <dbReference type="EC" id="2.7.4.6"/>
    </reaction>
</comment>
<comment type="catalytic activity">
    <reaction>
        <text>a ribonucleoside 5'-diphosphate + ATP = a ribonucleoside 5'-triphosphate + ADP</text>
        <dbReference type="Rhea" id="RHEA:18113"/>
        <dbReference type="ChEBI" id="CHEBI:30616"/>
        <dbReference type="ChEBI" id="CHEBI:57930"/>
        <dbReference type="ChEBI" id="CHEBI:61557"/>
        <dbReference type="ChEBI" id="CHEBI:456216"/>
        <dbReference type="EC" id="2.7.4.6"/>
    </reaction>
</comment>
<comment type="cofactor">
    <cofactor evidence="1">
        <name>Mg(2+)</name>
        <dbReference type="ChEBI" id="CHEBI:18420"/>
    </cofactor>
</comment>
<comment type="subcellular location">
    <subcellularLocation>
        <location>Cytoplasm</location>
    </subcellularLocation>
    <subcellularLocation>
        <location>Cell membrane</location>
    </subcellularLocation>
</comment>
<comment type="tissue specificity">
    <text>Highest levels in the liver and kidney with lower levels in the heart, brain and breast muscle.</text>
</comment>
<comment type="similarity">
    <text evidence="2">Belongs to the NDK family.</text>
</comment>
<dbReference type="EC" id="2.7.4.6"/>
<dbReference type="EMBL" id="U61287">
    <property type="protein sequence ID" value="AAC60275.1"/>
    <property type="molecule type" value="mRNA"/>
</dbReference>
<dbReference type="EMBL" id="AF018266">
    <property type="protein sequence ID" value="AAC78437.1"/>
    <property type="molecule type" value="Genomic_DNA"/>
</dbReference>
<dbReference type="RefSeq" id="NP_001269739.1">
    <property type="nucleotide sequence ID" value="NM_001282810.2"/>
</dbReference>
<dbReference type="SMR" id="Q90380"/>
<dbReference type="GeneID" id="102089990"/>
<dbReference type="KEGG" id="clv:102089990"/>
<dbReference type="eggNOG" id="KOG0888">
    <property type="taxonomic scope" value="Eukaryota"/>
</dbReference>
<dbReference type="OrthoDB" id="190455at8782"/>
<dbReference type="GO" id="GO:0005737">
    <property type="term" value="C:cytoplasm"/>
    <property type="evidence" value="ECO:0007669"/>
    <property type="project" value="UniProtKB-SubCell"/>
</dbReference>
<dbReference type="GO" id="GO:0005886">
    <property type="term" value="C:plasma membrane"/>
    <property type="evidence" value="ECO:0007669"/>
    <property type="project" value="UniProtKB-SubCell"/>
</dbReference>
<dbReference type="GO" id="GO:0005524">
    <property type="term" value="F:ATP binding"/>
    <property type="evidence" value="ECO:0007669"/>
    <property type="project" value="UniProtKB-KW"/>
</dbReference>
<dbReference type="GO" id="GO:0046872">
    <property type="term" value="F:metal ion binding"/>
    <property type="evidence" value="ECO:0007669"/>
    <property type="project" value="UniProtKB-KW"/>
</dbReference>
<dbReference type="GO" id="GO:0004550">
    <property type="term" value="F:nucleoside diphosphate kinase activity"/>
    <property type="evidence" value="ECO:0007669"/>
    <property type="project" value="UniProtKB-EC"/>
</dbReference>
<dbReference type="GO" id="GO:0006241">
    <property type="term" value="P:CTP biosynthetic process"/>
    <property type="evidence" value="ECO:0007669"/>
    <property type="project" value="InterPro"/>
</dbReference>
<dbReference type="GO" id="GO:0006183">
    <property type="term" value="P:GTP biosynthetic process"/>
    <property type="evidence" value="ECO:0007669"/>
    <property type="project" value="InterPro"/>
</dbReference>
<dbReference type="GO" id="GO:0006228">
    <property type="term" value="P:UTP biosynthetic process"/>
    <property type="evidence" value="ECO:0007669"/>
    <property type="project" value="InterPro"/>
</dbReference>
<dbReference type="CDD" id="cd04413">
    <property type="entry name" value="NDPk_I"/>
    <property type="match status" value="1"/>
</dbReference>
<dbReference type="FunFam" id="3.30.70.141:FF:000039">
    <property type="entry name" value="Nucleoside diphosphate kinase B"/>
    <property type="match status" value="1"/>
</dbReference>
<dbReference type="Gene3D" id="3.30.70.141">
    <property type="entry name" value="Nucleoside diphosphate kinase-like domain"/>
    <property type="match status" value="1"/>
</dbReference>
<dbReference type="HAMAP" id="MF_00451">
    <property type="entry name" value="NDP_kinase"/>
    <property type="match status" value="1"/>
</dbReference>
<dbReference type="InterPro" id="IPR034907">
    <property type="entry name" value="NDK-like_dom"/>
</dbReference>
<dbReference type="InterPro" id="IPR036850">
    <property type="entry name" value="NDK-like_dom_sf"/>
</dbReference>
<dbReference type="InterPro" id="IPR001564">
    <property type="entry name" value="Nucleoside_diP_kinase"/>
</dbReference>
<dbReference type="InterPro" id="IPR023005">
    <property type="entry name" value="Nucleoside_diP_kinase_AS"/>
</dbReference>
<dbReference type="NCBIfam" id="NF001908">
    <property type="entry name" value="PRK00668.1"/>
    <property type="match status" value="1"/>
</dbReference>
<dbReference type="PANTHER" id="PTHR11349">
    <property type="entry name" value="NUCLEOSIDE DIPHOSPHATE KINASE"/>
    <property type="match status" value="1"/>
</dbReference>
<dbReference type="Pfam" id="PF00334">
    <property type="entry name" value="NDK"/>
    <property type="match status" value="1"/>
</dbReference>
<dbReference type="PRINTS" id="PR01243">
    <property type="entry name" value="NUCDPKINASE"/>
</dbReference>
<dbReference type="SMART" id="SM00562">
    <property type="entry name" value="NDK"/>
    <property type="match status" value="1"/>
</dbReference>
<dbReference type="SUPFAM" id="SSF54919">
    <property type="entry name" value="Nucleoside diphosphate kinase, NDK"/>
    <property type="match status" value="1"/>
</dbReference>
<dbReference type="PROSITE" id="PS00469">
    <property type="entry name" value="NDPK"/>
    <property type="match status" value="1"/>
</dbReference>
<dbReference type="PROSITE" id="PS51374">
    <property type="entry name" value="NDPK_LIKE"/>
    <property type="match status" value="1"/>
</dbReference>
<keyword id="KW-0067">ATP-binding</keyword>
<keyword id="KW-1003">Cell membrane</keyword>
<keyword id="KW-0963">Cytoplasm</keyword>
<keyword id="KW-0418">Kinase</keyword>
<keyword id="KW-0460">Magnesium</keyword>
<keyword id="KW-0472">Membrane</keyword>
<keyword id="KW-0479">Metal-binding</keyword>
<keyword id="KW-0546">Nucleotide metabolism</keyword>
<keyword id="KW-0547">Nucleotide-binding</keyword>
<keyword id="KW-0597">Phosphoprotein</keyword>
<keyword id="KW-0808">Transferase</keyword>
<protein>
    <recommendedName>
        <fullName>Nucleoside diphosphate kinase</fullName>
        <shortName>NDK</shortName>
        <shortName>NDP kinase</shortName>
        <ecNumber>2.7.4.6</ecNumber>
    </recommendedName>
</protein>
<reference key="1">
    <citation type="journal article" date="1997" name="J. Biol. Chem.">
        <title>Characterization and cloning of a nucleoside-diphosphate kinase targeted to matrix of mitochondria in pigeon.</title>
        <authorList>
            <person name="Lambeth D.O."/>
            <person name="Mehus J.G."/>
            <person name="Ivey M.A."/>
            <person name="Milavetz B.I."/>
        </authorList>
    </citation>
    <scope>NUCLEOTIDE SEQUENCE [MRNA]</scope>
    <source>
        <tissue>Liver</tissue>
    </source>
</reference>
<evidence type="ECO:0000250" key="1"/>
<evidence type="ECO:0000305" key="2"/>